<accession>Q2QL85</accession>
<dbReference type="EMBL" id="DP000022">
    <property type="protein sequence ID" value="ABB89824.1"/>
    <property type="molecule type" value="Genomic_DNA"/>
</dbReference>
<dbReference type="RefSeq" id="XP_012616562.1">
    <property type="nucleotide sequence ID" value="XM_012761108.1"/>
</dbReference>
<dbReference type="SMR" id="Q2QL85"/>
<dbReference type="GlyCosmos" id="Q2QL85">
    <property type="glycosylation" value="1 site, No reported glycans"/>
</dbReference>
<dbReference type="Ensembl" id="ENSMICT00000005743.3">
    <property type="protein sequence ID" value="ENSMICP00000005240.3"/>
    <property type="gene ID" value="ENSMICG00000005749.3"/>
</dbReference>
<dbReference type="GeneID" id="105869373"/>
<dbReference type="KEGG" id="mmur:105869373"/>
<dbReference type="CTD" id="7472"/>
<dbReference type="GeneTree" id="ENSGT00940000159231"/>
<dbReference type="HOGENOM" id="CLU_033039_1_4_1"/>
<dbReference type="OMA" id="ITRMTKC"/>
<dbReference type="OrthoDB" id="5945655at2759"/>
<dbReference type="TreeFam" id="TF105310"/>
<dbReference type="Proteomes" id="UP000694394">
    <property type="component" value="Chromosome 11"/>
</dbReference>
<dbReference type="GO" id="GO:0005737">
    <property type="term" value="C:cytoplasm"/>
    <property type="evidence" value="ECO:0007669"/>
    <property type="project" value="Ensembl"/>
</dbReference>
<dbReference type="GO" id="GO:0005615">
    <property type="term" value="C:extracellular space"/>
    <property type="evidence" value="ECO:0007669"/>
    <property type="project" value="TreeGrafter"/>
</dbReference>
<dbReference type="GO" id="GO:0005125">
    <property type="term" value="F:cytokine activity"/>
    <property type="evidence" value="ECO:0007669"/>
    <property type="project" value="Ensembl"/>
</dbReference>
<dbReference type="GO" id="GO:0005109">
    <property type="term" value="F:frizzled binding"/>
    <property type="evidence" value="ECO:0007669"/>
    <property type="project" value="Ensembl"/>
</dbReference>
<dbReference type="GO" id="GO:0055009">
    <property type="term" value="P:atrial cardiac muscle tissue morphogenesis"/>
    <property type="evidence" value="ECO:0007669"/>
    <property type="project" value="Ensembl"/>
</dbReference>
<dbReference type="GO" id="GO:0060070">
    <property type="term" value="P:canonical Wnt signaling pathway"/>
    <property type="evidence" value="ECO:0007669"/>
    <property type="project" value="Ensembl"/>
</dbReference>
<dbReference type="GO" id="GO:0060317">
    <property type="term" value="P:cardiac epithelial to mesenchymal transition"/>
    <property type="evidence" value="ECO:0007669"/>
    <property type="project" value="Ensembl"/>
</dbReference>
<dbReference type="GO" id="GO:0060038">
    <property type="term" value="P:cardiac muscle cell proliferation"/>
    <property type="evidence" value="ECO:0007669"/>
    <property type="project" value="Ensembl"/>
</dbReference>
<dbReference type="GO" id="GO:0045165">
    <property type="term" value="P:cell fate commitment"/>
    <property type="evidence" value="ECO:0007669"/>
    <property type="project" value="TreeGrafter"/>
</dbReference>
<dbReference type="GO" id="GO:0033278">
    <property type="term" value="P:cell proliferation in midbrain"/>
    <property type="evidence" value="ECO:0007669"/>
    <property type="project" value="Ensembl"/>
</dbReference>
<dbReference type="GO" id="GO:0007267">
    <property type="term" value="P:cell-cell signaling"/>
    <property type="evidence" value="ECO:0007669"/>
    <property type="project" value="Ensembl"/>
</dbReference>
<dbReference type="GO" id="GO:0071560">
    <property type="term" value="P:cellular response to transforming growth factor beta stimulus"/>
    <property type="evidence" value="ECO:0007669"/>
    <property type="project" value="Ensembl"/>
</dbReference>
<dbReference type="GO" id="GO:0060502">
    <property type="term" value="P:epithelial cell proliferation involved in lung morphogenesis"/>
    <property type="evidence" value="ECO:0007669"/>
    <property type="project" value="Ensembl"/>
</dbReference>
<dbReference type="GO" id="GO:0060716">
    <property type="term" value="P:labyrinthine layer blood vessel development"/>
    <property type="evidence" value="ECO:0007669"/>
    <property type="project" value="Ensembl"/>
</dbReference>
<dbReference type="GO" id="GO:0060492">
    <property type="term" value="P:lung induction"/>
    <property type="evidence" value="ECO:0007669"/>
    <property type="project" value="Ensembl"/>
</dbReference>
<dbReference type="GO" id="GO:0061180">
    <property type="term" value="P:mammary gland epithelium development"/>
    <property type="evidence" value="ECO:0007669"/>
    <property type="project" value="Ensembl"/>
</dbReference>
<dbReference type="GO" id="GO:0010463">
    <property type="term" value="P:mesenchymal cell proliferation"/>
    <property type="evidence" value="ECO:0007669"/>
    <property type="project" value="Ensembl"/>
</dbReference>
<dbReference type="GO" id="GO:1904948">
    <property type="term" value="P:midbrain dopaminergic neuron differentiation"/>
    <property type="evidence" value="ECO:0007669"/>
    <property type="project" value="Ensembl"/>
</dbReference>
<dbReference type="GO" id="GO:0060045">
    <property type="term" value="P:positive regulation of cardiac muscle cell proliferation"/>
    <property type="evidence" value="ECO:0007669"/>
    <property type="project" value="Ensembl"/>
</dbReference>
<dbReference type="GO" id="GO:0060501">
    <property type="term" value="P:positive regulation of epithelial cell proliferation involved in lung morphogenesis"/>
    <property type="evidence" value="ECO:0007669"/>
    <property type="project" value="Ensembl"/>
</dbReference>
<dbReference type="GO" id="GO:0048146">
    <property type="term" value="P:positive regulation of fibroblast proliferation"/>
    <property type="evidence" value="ECO:0007669"/>
    <property type="project" value="Ensembl"/>
</dbReference>
<dbReference type="GO" id="GO:0002053">
    <property type="term" value="P:positive regulation of mesenchymal cell proliferation"/>
    <property type="evidence" value="ECO:0007669"/>
    <property type="project" value="Ensembl"/>
</dbReference>
<dbReference type="GO" id="GO:0050769">
    <property type="term" value="P:positive regulation of neurogenesis"/>
    <property type="evidence" value="ECO:0007669"/>
    <property type="project" value="Ensembl"/>
</dbReference>
<dbReference type="GO" id="GO:0045944">
    <property type="term" value="P:positive regulation of transcription by RNA polymerase II"/>
    <property type="evidence" value="ECO:0007669"/>
    <property type="project" value="Ensembl"/>
</dbReference>
<dbReference type="CDD" id="cd19345">
    <property type="entry name" value="Wnt_Wnt2"/>
    <property type="match status" value="1"/>
</dbReference>
<dbReference type="FunFam" id="3.30.2460.20:FF:000001">
    <property type="entry name" value="Wnt homolog"/>
    <property type="match status" value="1"/>
</dbReference>
<dbReference type="Gene3D" id="3.30.2460.20">
    <property type="match status" value="1"/>
</dbReference>
<dbReference type="InterPro" id="IPR005817">
    <property type="entry name" value="Wnt"/>
</dbReference>
<dbReference type="InterPro" id="IPR009140">
    <property type="entry name" value="Wnt2"/>
</dbReference>
<dbReference type="InterPro" id="IPR043158">
    <property type="entry name" value="Wnt_C"/>
</dbReference>
<dbReference type="InterPro" id="IPR018161">
    <property type="entry name" value="Wnt_CS"/>
</dbReference>
<dbReference type="PANTHER" id="PTHR12027:SF86">
    <property type="entry name" value="PROTEIN WNT-2"/>
    <property type="match status" value="1"/>
</dbReference>
<dbReference type="PANTHER" id="PTHR12027">
    <property type="entry name" value="WNT RELATED"/>
    <property type="match status" value="1"/>
</dbReference>
<dbReference type="Pfam" id="PF00110">
    <property type="entry name" value="wnt"/>
    <property type="match status" value="1"/>
</dbReference>
<dbReference type="PRINTS" id="PR01842">
    <property type="entry name" value="WNT2PROTEIN"/>
</dbReference>
<dbReference type="PRINTS" id="PR01349">
    <property type="entry name" value="WNTPROTEIN"/>
</dbReference>
<dbReference type="SMART" id="SM00097">
    <property type="entry name" value="WNT1"/>
    <property type="match status" value="1"/>
</dbReference>
<dbReference type="PROSITE" id="PS00246">
    <property type="entry name" value="WNT1"/>
    <property type="match status" value="1"/>
</dbReference>
<reference key="1">
    <citation type="submission" date="2005-11" db="EMBL/GenBank/DDBJ databases">
        <title>NISC comparative sequencing initiative.</title>
        <authorList>
            <person name="Antonellis A."/>
            <person name="Ayele K."/>
            <person name="Benjamin B."/>
            <person name="Blakesley R.W."/>
            <person name="Boakye A."/>
            <person name="Bouffard G.G."/>
            <person name="Brinkley C."/>
            <person name="Brooks S."/>
            <person name="Chu G."/>
            <person name="Coleman H."/>
            <person name="Engle J."/>
            <person name="Gestole M."/>
            <person name="Greene A."/>
            <person name="Guan X."/>
            <person name="Gupta J."/>
            <person name="Haghighi P."/>
            <person name="Han J."/>
            <person name="Hansen N."/>
            <person name="Ho S.-L."/>
            <person name="Hu P."/>
            <person name="Hunter G."/>
            <person name="Hurle B."/>
            <person name="Idol J.R."/>
            <person name="Kwong P."/>
            <person name="Laric P."/>
            <person name="Larson S."/>
            <person name="Lee-Lin S.-Q."/>
            <person name="Legaspi R."/>
            <person name="Madden M."/>
            <person name="Maduro Q.L."/>
            <person name="Maduro V.B."/>
            <person name="Margulies E.H."/>
            <person name="Masiello C."/>
            <person name="Maskeri B."/>
            <person name="McDowell J."/>
            <person name="Mojidi H.A."/>
            <person name="Mullikin J.C."/>
            <person name="Oestreicher J.S."/>
            <person name="Park M."/>
            <person name="Portnoy M.E."/>
            <person name="Prasad A."/>
            <person name="Puri O."/>
            <person name="Reddix-Dugue N."/>
            <person name="Schandler K."/>
            <person name="Schueler M.G."/>
            <person name="Sison C."/>
            <person name="Stantripop S."/>
            <person name="Stephen E."/>
            <person name="Taye A."/>
            <person name="Thomas J.W."/>
            <person name="Thomas P.J."/>
            <person name="Tsipouri V."/>
            <person name="Ung L."/>
            <person name="Vogt J.L."/>
            <person name="Wetherby K.D."/>
            <person name="Young A."/>
            <person name="Green E.D."/>
        </authorList>
    </citation>
    <scope>NUCLEOTIDE SEQUENCE [LARGE SCALE GENOMIC DNA]</scope>
</reference>
<proteinExistence type="inferred from homology"/>
<protein>
    <recommendedName>
        <fullName>Protein Wnt-2</fullName>
    </recommendedName>
</protein>
<evidence type="ECO:0000250" key="1">
    <source>
        <dbReference type="UniProtKB" id="P09544"/>
    </source>
</evidence>
<evidence type="ECO:0000250" key="2">
    <source>
        <dbReference type="UniProtKB" id="P21552"/>
    </source>
</evidence>
<evidence type="ECO:0000250" key="3">
    <source>
        <dbReference type="UniProtKB" id="P28026"/>
    </source>
</evidence>
<evidence type="ECO:0000250" key="4">
    <source>
        <dbReference type="UniProtKB" id="P56704"/>
    </source>
</evidence>
<evidence type="ECO:0000255" key="5"/>
<evidence type="ECO:0000305" key="6"/>
<organism>
    <name type="scientific">Microcebus murinus</name>
    <name type="common">Gray mouse lemur</name>
    <name type="synonym">Lemur murinus</name>
    <dbReference type="NCBI Taxonomy" id="30608"/>
    <lineage>
        <taxon>Eukaryota</taxon>
        <taxon>Metazoa</taxon>
        <taxon>Chordata</taxon>
        <taxon>Craniata</taxon>
        <taxon>Vertebrata</taxon>
        <taxon>Euteleostomi</taxon>
        <taxon>Mammalia</taxon>
        <taxon>Eutheria</taxon>
        <taxon>Euarchontoglires</taxon>
        <taxon>Primates</taxon>
        <taxon>Strepsirrhini</taxon>
        <taxon>Lemuriformes</taxon>
        <taxon>Cheirogaleidae</taxon>
        <taxon>Microcebus</taxon>
    </lineage>
</organism>
<keyword id="KW-0217">Developmental protein</keyword>
<keyword id="KW-1015">Disulfide bond</keyword>
<keyword id="KW-0272">Extracellular matrix</keyword>
<keyword id="KW-0325">Glycoprotein</keyword>
<keyword id="KW-0449">Lipoprotein</keyword>
<keyword id="KW-1185">Reference proteome</keyword>
<keyword id="KW-0964">Secreted</keyword>
<keyword id="KW-0732">Signal</keyword>
<keyword id="KW-0879">Wnt signaling pathway</keyword>
<gene>
    <name type="primary">WNT2</name>
</gene>
<feature type="signal peptide" evidence="5">
    <location>
        <begin position="1"/>
        <end position="25"/>
    </location>
</feature>
<feature type="chain" id="PRO_0000226065" description="Protein Wnt-2">
    <location>
        <begin position="26"/>
        <end position="360"/>
    </location>
</feature>
<feature type="lipid moiety-binding region" description="O-palmitoleoyl serine; by PORCN" evidence="4">
    <location>
        <position position="212"/>
    </location>
</feature>
<feature type="glycosylation site" description="N-linked (GlcNAc...) asparagine" evidence="5">
    <location>
        <position position="295"/>
    </location>
</feature>
<feature type="disulfide bond" evidence="3">
    <location>
        <begin position="76"/>
        <end position="87"/>
    </location>
</feature>
<feature type="disulfide bond" evidence="3">
    <location>
        <begin position="127"/>
        <end position="135"/>
    </location>
</feature>
<feature type="disulfide bond" evidence="3">
    <location>
        <begin position="137"/>
        <end position="157"/>
    </location>
</feature>
<feature type="disulfide bond" evidence="3">
    <location>
        <begin position="206"/>
        <end position="220"/>
    </location>
</feature>
<feature type="disulfide bond" evidence="3">
    <location>
        <begin position="208"/>
        <end position="215"/>
    </location>
</feature>
<feature type="disulfide bond" evidence="3">
    <location>
        <begin position="278"/>
        <end position="309"/>
    </location>
</feature>
<feature type="disulfide bond" evidence="3">
    <location>
        <begin position="294"/>
        <end position="304"/>
    </location>
</feature>
<feature type="disulfide bond" evidence="3">
    <location>
        <begin position="308"/>
        <end position="348"/>
    </location>
</feature>
<feature type="disulfide bond" evidence="3">
    <location>
        <begin position="324"/>
        <end position="339"/>
    </location>
</feature>
<feature type="disulfide bond" evidence="3">
    <location>
        <begin position="326"/>
        <end position="336"/>
    </location>
</feature>
<feature type="disulfide bond" evidence="3">
    <location>
        <begin position="331"/>
        <end position="332"/>
    </location>
</feature>
<comment type="function">
    <text evidence="1 2">Ligand for members of the frizzled family of seven transmembrane receptors. Functions in the canonical Wnt signaling pathway that results in activation of transcription factors of the TCF/LEF family (By similarity). Functions as a upstream regulator of FGF10 expression. Plays an important role in embryonic lung development. May contribute to embryonic brain development by regulating the proliferation of dopaminergic precursors and neurons (By similarity).</text>
</comment>
<comment type="subcellular location">
    <subcellularLocation>
        <location evidence="1">Secreted</location>
        <location evidence="1">Extracellular space</location>
        <location evidence="1">Extracellular matrix</location>
    </subcellularLocation>
    <subcellularLocation>
        <location evidence="1">Secreted</location>
    </subcellularLocation>
</comment>
<comment type="PTM">
    <text evidence="1">Palmitoleoylation is required for efficient binding to frizzled receptors. Depalmitoleoylation leads to Wnt signaling pathway inhibition.</text>
</comment>
<comment type="similarity">
    <text evidence="6">Belongs to the Wnt family.</text>
</comment>
<name>WNT2_MICMU</name>
<sequence length="360" mass="40516">MNAPLGGIWLWLPLLLTWLTPEVSSSWWYMRATGGSSRVMCDNVPGLVSRQRQLCHRHPDVMRAISLGVSEWTAECQHQFRQHRWNCNTLDRDHSLFGRVLLRSSRESAFVYAISSAGVVFAITRACSQGELKSCSCDPKKKGTAKDSKGTFDWGGCSDNIDYGIKFARAFVDAKERKGKDARALMNLHNNRAGRKAVKRFLKQECKCHGVSGSCTLRTCWLAMADFRKTGAYLWRKYNGAIQVVMNQDGTGFTVANKRFKKPTKNDLVYFENSPDYCIRDREAGSLGTAGRVCNLTSRGMDSCEVMCCGRGYDTSRVTRMTKCECKFHWCCAVRCQDCLEALDVHTCKAPKNADWATPT</sequence>